<dbReference type="EMBL" id="CP001013">
    <property type="protein sequence ID" value="ACB32757.1"/>
    <property type="molecule type" value="Genomic_DNA"/>
</dbReference>
<dbReference type="RefSeq" id="WP_012345519.1">
    <property type="nucleotide sequence ID" value="NC_010524.1"/>
</dbReference>
<dbReference type="SMR" id="B1XXY8"/>
<dbReference type="STRING" id="395495.Lcho_0482"/>
<dbReference type="KEGG" id="lch:Lcho_0482"/>
<dbReference type="eggNOG" id="COG0234">
    <property type="taxonomic scope" value="Bacteria"/>
</dbReference>
<dbReference type="HOGENOM" id="CLU_132825_0_0_4"/>
<dbReference type="OrthoDB" id="9806791at2"/>
<dbReference type="Proteomes" id="UP000001693">
    <property type="component" value="Chromosome"/>
</dbReference>
<dbReference type="GO" id="GO:0005737">
    <property type="term" value="C:cytoplasm"/>
    <property type="evidence" value="ECO:0007669"/>
    <property type="project" value="UniProtKB-SubCell"/>
</dbReference>
<dbReference type="GO" id="GO:0005524">
    <property type="term" value="F:ATP binding"/>
    <property type="evidence" value="ECO:0007669"/>
    <property type="project" value="InterPro"/>
</dbReference>
<dbReference type="GO" id="GO:0046872">
    <property type="term" value="F:metal ion binding"/>
    <property type="evidence" value="ECO:0007669"/>
    <property type="project" value="TreeGrafter"/>
</dbReference>
<dbReference type="GO" id="GO:0044183">
    <property type="term" value="F:protein folding chaperone"/>
    <property type="evidence" value="ECO:0007669"/>
    <property type="project" value="InterPro"/>
</dbReference>
<dbReference type="GO" id="GO:0051087">
    <property type="term" value="F:protein-folding chaperone binding"/>
    <property type="evidence" value="ECO:0007669"/>
    <property type="project" value="TreeGrafter"/>
</dbReference>
<dbReference type="GO" id="GO:0051082">
    <property type="term" value="F:unfolded protein binding"/>
    <property type="evidence" value="ECO:0007669"/>
    <property type="project" value="TreeGrafter"/>
</dbReference>
<dbReference type="GO" id="GO:0051085">
    <property type="term" value="P:chaperone cofactor-dependent protein refolding"/>
    <property type="evidence" value="ECO:0007669"/>
    <property type="project" value="TreeGrafter"/>
</dbReference>
<dbReference type="CDD" id="cd00320">
    <property type="entry name" value="cpn10"/>
    <property type="match status" value="1"/>
</dbReference>
<dbReference type="FunFam" id="2.30.33.40:FF:000001">
    <property type="entry name" value="10 kDa chaperonin"/>
    <property type="match status" value="1"/>
</dbReference>
<dbReference type="Gene3D" id="2.30.33.40">
    <property type="entry name" value="GroES chaperonin"/>
    <property type="match status" value="1"/>
</dbReference>
<dbReference type="HAMAP" id="MF_00580">
    <property type="entry name" value="CH10"/>
    <property type="match status" value="1"/>
</dbReference>
<dbReference type="InterPro" id="IPR020818">
    <property type="entry name" value="Chaperonin_GroES"/>
</dbReference>
<dbReference type="InterPro" id="IPR037124">
    <property type="entry name" value="Chaperonin_GroES_sf"/>
</dbReference>
<dbReference type="InterPro" id="IPR018369">
    <property type="entry name" value="Chaprnonin_Cpn10_CS"/>
</dbReference>
<dbReference type="InterPro" id="IPR011032">
    <property type="entry name" value="GroES-like_sf"/>
</dbReference>
<dbReference type="NCBIfam" id="NF001527">
    <property type="entry name" value="PRK00364.1-2"/>
    <property type="match status" value="1"/>
</dbReference>
<dbReference type="NCBIfam" id="NF001529">
    <property type="entry name" value="PRK00364.1-5"/>
    <property type="match status" value="1"/>
</dbReference>
<dbReference type="NCBIfam" id="NF001531">
    <property type="entry name" value="PRK00364.2-2"/>
    <property type="match status" value="1"/>
</dbReference>
<dbReference type="NCBIfam" id="NF001533">
    <property type="entry name" value="PRK00364.2-4"/>
    <property type="match status" value="1"/>
</dbReference>
<dbReference type="NCBIfam" id="NF001534">
    <property type="entry name" value="PRK00364.2-5"/>
    <property type="match status" value="1"/>
</dbReference>
<dbReference type="PANTHER" id="PTHR10772">
    <property type="entry name" value="10 KDA HEAT SHOCK PROTEIN"/>
    <property type="match status" value="1"/>
</dbReference>
<dbReference type="PANTHER" id="PTHR10772:SF58">
    <property type="entry name" value="CO-CHAPERONIN GROES"/>
    <property type="match status" value="1"/>
</dbReference>
<dbReference type="Pfam" id="PF00166">
    <property type="entry name" value="Cpn10"/>
    <property type="match status" value="1"/>
</dbReference>
<dbReference type="PRINTS" id="PR00297">
    <property type="entry name" value="CHAPERONIN10"/>
</dbReference>
<dbReference type="SMART" id="SM00883">
    <property type="entry name" value="Cpn10"/>
    <property type="match status" value="1"/>
</dbReference>
<dbReference type="SUPFAM" id="SSF50129">
    <property type="entry name" value="GroES-like"/>
    <property type="match status" value="1"/>
</dbReference>
<dbReference type="PROSITE" id="PS00681">
    <property type="entry name" value="CHAPERONINS_CPN10"/>
    <property type="match status" value="1"/>
</dbReference>
<reference key="1">
    <citation type="submission" date="2008-03" db="EMBL/GenBank/DDBJ databases">
        <title>Complete sequence of Leptothrix cholodnii SP-6.</title>
        <authorList>
            <consortium name="US DOE Joint Genome Institute"/>
            <person name="Copeland A."/>
            <person name="Lucas S."/>
            <person name="Lapidus A."/>
            <person name="Glavina del Rio T."/>
            <person name="Dalin E."/>
            <person name="Tice H."/>
            <person name="Bruce D."/>
            <person name="Goodwin L."/>
            <person name="Pitluck S."/>
            <person name="Chertkov O."/>
            <person name="Brettin T."/>
            <person name="Detter J.C."/>
            <person name="Han C."/>
            <person name="Kuske C.R."/>
            <person name="Schmutz J."/>
            <person name="Larimer F."/>
            <person name="Land M."/>
            <person name="Hauser L."/>
            <person name="Kyrpides N."/>
            <person name="Lykidis A."/>
            <person name="Emerson D."/>
            <person name="Richardson P."/>
        </authorList>
    </citation>
    <scope>NUCLEOTIDE SEQUENCE [LARGE SCALE GENOMIC DNA]</scope>
    <source>
        <strain>ATCC 51168 / LMG 8142 / SP-6</strain>
    </source>
</reference>
<gene>
    <name evidence="1" type="primary">groES</name>
    <name evidence="1" type="synonym">groS</name>
    <name type="ordered locus">Lcho_0482</name>
</gene>
<accession>B1XXY8</accession>
<evidence type="ECO:0000255" key="1">
    <source>
        <dbReference type="HAMAP-Rule" id="MF_00580"/>
    </source>
</evidence>
<name>CH10_LEPCP</name>
<sequence length="96" mass="10459">MKLRPLHDRVIVKRLEQETKTASGIVIPDNAAEKPDQGEVLAVGPGKRNDKGDFVALNVAVGDRVLFGKYSGQTVKVDGDELLVMREEDLFAVVGK</sequence>
<keyword id="KW-0143">Chaperone</keyword>
<keyword id="KW-0963">Cytoplasm</keyword>
<keyword id="KW-1185">Reference proteome</keyword>
<feature type="chain" id="PRO_1000129678" description="Co-chaperonin GroES">
    <location>
        <begin position="1"/>
        <end position="96"/>
    </location>
</feature>
<organism>
    <name type="scientific">Leptothrix cholodnii (strain ATCC 51168 / LMG 8142 / SP-6)</name>
    <name type="common">Leptothrix discophora (strain SP-6)</name>
    <dbReference type="NCBI Taxonomy" id="395495"/>
    <lineage>
        <taxon>Bacteria</taxon>
        <taxon>Pseudomonadati</taxon>
        <taxon>Pseudomonadota</taxon>
        <taxon>Betaproteobacteria</taxon>
        <taxon>Burkholderiales</taxon>
        <taxon>Sphaerotilaceae</taxon>
        <taxon>Leptothrix</taxon>
    </lineage>
</organism>
<comment type="function">
    <text evidence="1">Together with the chaperonin GroEL, plays an essential role in assisting protein folding. The GroEL-GroES system forms a nano-cage that allows encapsulation of the non-native substrate proteins and provides a physical environment optimized to promote and accelerate protein folding. GroES binds to the apical surface of the GroEL ring, thereby capping the opening of the GroEL channel.</text>
</comment>
<comment type="subunit">
    <text evidence="1">Heptamer of 7 subunits arranged in a ring. Interacts with the chaperonin GroEL.</text>
</comment>
<comment type="subcellular location">
    <subcellularLocation>
        <location evidence="1">Cytoplasm</location>
    </subcellularLocation>
</comment>
<comment type="similarity">
    <text evidence="1">Belongs to the GroES chaperonin family.</text>
</comment>
<protein>
    <recommendedName>
        <fullName evidence="1">Co-chaperonin GroES</fullName>
    </recommendedName>
    <alternativeName>
        <fullName evidence="1">10 kDa chaperonin</fullName>
    </alternativeName>
    <alternativeName>
        <fullName evidence="1">Chaperonin-10</fullName>
        <shortName evidence="1">Cpn10</shortName>
    </alternativeName>
</protein>
<proteinExistence type="inferred from homology"/>